<accession>P39795</accession>
<accession>O34517</accession>
<keyword id="KW-0963">Cytoplasm</keyword>
<keyword id="KW-0326">Glycosidase</keyword>
<keyword id="KW-0378">Hydrolase</keyword>
<keyword id="KW-1185">Reference proteome</keyword>
<gene>
    <name evidence="4" type="primary">treA</name>
    <name type="synonym">treC</name>
    <name type="ordered locus">BSU07810</name>
</gene>
<sequence length="561" mass="65184">MKTEQTPWWKKAVVYQIYPKSFNDTTGNGVGDLNGIIEKLDYLKTLQVDVLWLTPIYDSPQHDNGYDIRDYYSIYPEYGTMEDFERLVSEAHKRDLKVVMDLVVNHTSTEHKWFREAISSIDSPYRDFYIWKKPQENGSVPTNWESKFGGSAWELDEASGQYYLHLFDVTQADLNWENEEVRKHVYDMMHFWFEKGIDGFRLDVINLISKDQRFPNAEEGDGRSFYTDGPRVHEFLHEMNEKVFSHYDSMTVGEMSSTTVDHCIRYTNPDNKELDMTFSFHHLKVDYPNGEKWALAPFDFLKLKEILSDWQTGMHAGGGWNALFWCNHDQPRVVSRYGDDGAYRVKSAKMLATAIHMMQGTPYIYQGEELGMTNPKFTDISSYRDVESLNMYHAFKEKGMADQDITAILQAKSRDNSRTPVQWDATENGGFTTGTPWIPVAGNYREINAEAALRDQNSVFYHYQKLIQIRKMYDIVTEGTYEIIAKDDPNIFAYLRHGSNEKLLVINNFYGTEAAFTLPDSLAPDEWKAEVLLTNDEAREGLQNMTLRPYESIVYRLTKPC</sequence>
<reference key="1">
    <citation type="journal article" date="1995" name="Mol. Microbiol.">
        <title>Cleavage of trehalose-phosphate in Bacillus subtilis is catalysed by a phospho-alpha-(1-1)-glucosidase encoded by the treA gene.</title>
        <authorList>
            <person name="Helfert C."/>
            <person name="Gotsche S."/>
            <person name="Dahl M.K."/>
        </authorList>
    </citation>
    <scope>NUCLEOTIDE SEQUENCE [GENOMIC DNA]</scope>
    <scope>FUNCTION</scope>
    <scope>CATALYTIC ACTIVITY</scope>
    <scope>SUBCELLULAR LOCATION</scope>
    <scope>INDUCTION</scope>
    <source>
        <strain>168 / Marburg / ATCC 6051 / DSM 10 / JCM 1465 / NBRC 13719 / NCIMB 3610 / NRRL NRS-744 / VKM B-501</strain>
    </source>
</reference>
<reference key="2">
    <citation type="journal article" date="1996" name="Microbiology">
        <title>Cloning and sequencing of a 40.6 kb segment in the 73 degrees-76 degrees region of the Bacillus subtilis chromosome containing genes for trehalose metabolism and acetoin utilization.</title>
        <authorList>
            <person name="Yamamoto H."/>
            <person name="Uchiyama S."/>
            <person name="Sekiguchi J."/>
        </authorList>
    </citation>
    <scope>NUCLEOTIDE SEQUENCE [GENOMIC DNA]</scope>
    <source>
        <strain>168 / AC327</strain>
    </source>
</reference>
<reference key="3">
    <citation type="journal article" date="1997" name="Nature">
        <title>The complete genome sequence of the Gram-positive bacterium Bacillus subtilis.</title>
        <authorList>
            <person name="Kunst F."/>
            <person name="Ogasawara N."/>
            <person name="Moszer I."/>
            <person name="Albertini A.M."/>
            <person name="Alloni G."/>
            <person name="Azevedo V."/>
            <person name="Bertero M.G."/>
            <person name="Bessieres P."/>
            <person name="Bolotin A."/>
            <person name="Borchert S."/>
            <person name="Borriss R."/>
            <person name="Boursier L."/>
            <person name="Brans A."/>
            <person name="Braun M."/>
            <person name="Brignell S.C."/>
            <person name="Bron S."/>
            <person name="Brouillet S."/>
            <person name="Bruschi C.V."/>
            <person name="Caldwell B."/>
            <person name="Capuano V."/>
            <person name="Carter N.M."/>
            <person name="Choi S.-K."/>
            <person name="Codani J.-J."/>
            <person name="Connerton I.F."/>
            <person name="Cummings N.J."/>
            <person name="Daniel R.A."/>
            <person name="Denizot F."/>
            <person name="Devine K.M."/>
            <person name="Duesterhoeft A."/>
            <person name="Ehrlich S.D."/>
            <person name="Emmerson P.T."/>
            <person name="Entian K.-D."/>
            <person name="Errington J."/>
            <person name="Fabret C."/>
            <person name="Ferrari E."/>
            <person name="Foulger D."/>
            <person name="Fritz C."/>
            <person name="Fujita M."/>
            <person name="Fujita Y."/>
            <person name="Fuma S."/>
            <person name="Galizzi A."/>
            <person name="Galleron N."/>
            <person name="Ghim S.-Y."/>
            <person name="Glaser P."/>
            <person name="Goffeau A."/>
            <person name="Golightly E.J."/>
            <person name="Grandi G."/>
            <person name="Guiseppi G."/>
            <person name="Guy B.J."/>
            <person name="Haga K."/>
            <person name="Haiech J."/>
            <person name="Harwood C.R."/>
            <person name="Henaut A."/>
            <person name="Hilbert H."/>
            <person name="Holsappel S."/>
            <person name="Hosono S."/>
            <person name="Hullo M.-F."/>
            <person name="Itaya M."/>
            <person name="Jones L.-M."/>
            <person name="Joris B."/>
            <person name="Karamata D."/>
            <person name="Kasahara Y."/>
            <person name="Klaerr-Blanchard M."/>
            <person name="Klein C."/>
            <person name="Kobayashi Y."/>
            <person name="Koetter P."/>
            <person name="Koningstein G."/>
            <person name="Krogh S."/>
            <person name="Kumano M."/>
            <person name="Kurita K."/>
            <person name="Lapidus A."/>
            <person name="Lardinois S."/>
            <person name="Lauber J."/>
            <person name="Lazarevic V."/>
            <person name="Lee S.-M."/>
            <person name="Levine A."/>
            <person name="Liu H."/>
            <person name="Masuda S."/>
            <person name="Mauel C."/>
            <person name="Medigue C."/>
            <person name="Medina N."/>
            <person name="Mellado R.P."/>
            <person name="Mizuno M."/>
            <person name="Moestl D."/>
            <person name="Nakai S."/>
            <person name="Noback M."/>
            <person name="Noone D."/>
            <person name="O'Reilly M."/>
            <person name="Ogawa K."/>
            <person name="Ogiwara A."/>
            <person name="Oudega B."/>
            <person name="Park S.-H."/>
            <person name="Parro V."/>
            <person name="Pohl T.M."/>
            <person name="Portetelle D."/>
            <person name="Porwollik S."/>
            <person name="Prescott A.M."/>
            <person name="Presecan E."/>
            <person name="Pujic P."/>
            <person name="Purnelle B."/>
            <person name="Rapoport G."/>
            <person name="Rey M."/>
            <person name="Reynolds S."/>
            <person name="Rieger M."/>
            <person name="Rivolta C."/>
            <person name="Rocha E."/>
            <person name="Roche B."/>
            <person name="Rose M."/>
            <person name="Sadaie Y."/>
            <person name="Sato T."/>
            <person name="Scanlan E."/>
            <person name="Schleich S."/>
            <person name="Schroeter R."/>
            <person name="Scoffone F."/>
            <person name="Sekiguchi J."/>
            <person name="Sekowska A."/>
            <person name="Seror S.J."/>
            <person name="Serror P."/>
            <person name="Shin B.-S."/>
            <person name="Soldo B."/>
            <person name="Sorokin A."/>
            <person name="Tacconi E."/>
            <person name="Takagi T."/>
            <person name="Takahashi H."/>
            <person name="Takemaru K."/>
            <person name="Takeuchi M."/>
            <person name="Tamakoshi A."/>
            <person name="Tanaka T."/>
            <person name="Terpstra P."/>
            <person name="Tognoni A."/>
            <person name="Tosato V."/>
            <person name="Uchiyama S."/>
            <person name="Vandenbol M."/>
            <person name="Vannier F."/>
            <person name="Vassarotti A."/>
            <person name="Viari A."/>
            <person name="Wambutt R."/>
            <person name="Wedler E."/>
            <person name="Wedler H."/>
            <person name="Weitzenegger T."/>
            <person name="Winters P."/>
            <person name="Wipat A."/>
            <person name="Yamamoto H."/>
            <person name="Yamane K."/>
            <person name="Yasumoto K."/>
            <person name="Yata K."/>
            <person name="Yoshida K."/>
            <person name="Yoshikawa H.-F."/>
            <person name="Zumstein E."/>
            <person name="Yoshikawa H."/>
            <person name="Danchin A."/>
        </authorList>
    </citation>
    <scope>NUCLEOTIDE SEQUENCE [LARGE SCALE GENOMIC DNA]</scope>
    <source>
        <strain>168</strain>
    </source>
</reference>
<reference key="4">
    <citation type="journal article" date="1995" name="J. Bacteriol.">
        <title>Purification and characterization of the phospho-alpha(1,1)glucosidase (TreA) of Bacillus subtilis 168.</title>
        <authorList>
            <person name="Gotsche S."/>
            <person name="Dahl M.K."/>
        </authorList>
    </citation>
    <scope>FUNCTION</scope>
    <scope>CATALYTIC ACTIVITY</scope>
    <scope>ACTIVITY REGULATION</scope>
    <scope>BIOPHYSICOCHEMICAL PROPERTIES</scope>
</reference>
<proteinExistence type="evidence at protein level"/>
<evidence type="ECO:0000250" key="1">
    <source>
        <dbReference type="UniProtKB" id="P00691"/>
    </source>
</evidence>
<evidence type="ECO:0000269" key="2">
    <source>
    </source>
</evidence>
<evidence type="ECO:0000269" key="3">
    <source>
    </source>
</evidence>
<evidence type="ECO:0000303" key="4">
    <source>
    </source>
</evidence>
<evidence type="ECO:0000305" key="5"/>
<dbReference type="EC" id="3.2.1.93" evidence="2 3"/>
<dbReference type="EMBL" id="Z54245">
    <property type="protein sequence ID" value="CAA91015.1"/>
    <property type="molecule type" value="Genomic_DNA"/>
</dbReference>
<dbReference type="EMBL" id="X80203">
    <property type="protein sequence ID" value="CAA56495.1"/>
    <property type="molecule type" value="Genomic_DNA"/>
</dbReference>
<dbReference type="EMBL" id="D83967">
    <property type="protein sequence ID" value="BAA23408.1"/>
    <property type="molecule type" value="Genomic_DNA"/>
</dbReference>
<dbReference type="EMBL" id="AL009126">
    <property type="protein sequence ID" value="CAB12610.1"/>
    <property type="molecule type" value="Genomic_DNA"/>
</dbReference>
<dbReference type="PIR" id="B69725">
    <property type="entry name" value="B69725"/>
</dbReference>
<dbReference type="RefSeq" id="NP_388662.1">
    <property type="nucleotide sequence ID" value="NC_000964.3"/>
</dbReference>
<dbReference type="RefSeq" id="WP_003244272.1">
    <property type="nucleotide sequence ID" value="NZ_OZ025638.1"/>
</dbReference>
<dbReference type="SMR" id="P39795"/>
<dbReference type="FunCoup" id="P39795">
    <property type="interactions" value="202"/>
</dbReference>
<dbReference type="STRING" id="224308.BSU07810"/>
<dbReference type="CAZy" id="GH13">
    <property type="family name" value="Glycoside Hydrolase Family 13"/>
</dbReference>
<dbReference type="jPOST" id="P39795"/>
<dbReference type="PaxDb" id="224308-BSU07810"/>
<dbReference type="EnsemblBacteria" id="CAB12610">
    <property type="protein sequence ID" value="CAB12610"/>
    <property type="gene ID" value="BSU_07810"/>
</dbReference>
<dbReference type="GeneID" id="939690"/>
<dbReference type="KEGG" id="bsu:BSU07810"/>
<dbReference type="PATRIC" id="fig|224308.179.peg.845"/>
<dbReference type="eggNOG" id="COG0366">
    <property type="taxonomic scope" value="Bacteria"/>
</dbReference>
<dbReference type="InParanoid" id="P39795"/>
<dbReference type="OrthoDB" id="9805159at2"/>
<dbReference type="PhylomeDB" id="P39795"/>
<dbReference type="BioCyc" id="BSUB:BSU07810-MONOMER"/>
<dbReference type="BioCyc" id="MetaCyc:MONOMER-5946"/>
<dbReference type="Proteomes" id="UP000001570">
    <property type="component" value="Chromosome"/>
</dbReference>
<dbReference type="GO" id="GO:0005737">
    <property type="term" value="C:cytoplasm"/>
    <property type="evidence" value="ECO:0007669"/>
    <property type="project" value="UniProtKB-SubCell"/>
</dbReference>
<dbReference type="GO" id="GO:0008788">
    <property type="term" value="F:alpha,alpha-phosphotrehalase activity"/>
    <property type="evidence" value="ECO:0007669"/>
    <property type="project" value="UniProtKB-EC"/>
</dbReference>
<dbReference type="GO" id="GO:0004556">
    <property type="term" value="F:alpha-amylase activity"/>
    <property type="evidence" value="ECO:0000318"/>
    <property type="project" value="GO_Central"/>
</dbReference>
<dbReference type="GO" id="GO:0009313">
    <property type="term" value="P:oligosaccharide catabolic process"/>
    <property type="evidence" value="ECO:0000318"/>
    <property type="project" value="GO_Central"/>
</dbReference>
<dbReference type="GO" id="GO:0005993">
    <property type="term" value="P:trehalose catabolic process"/>
    <property type="evidence" value="ECO:0007669"/>
    <property type="project" value="InterPro"/>
</dbReference>
<dbReference type="CDD" id="cd11333">
    <property type="entry name" value="AmyAc_SI_OligoGlu_DGase"/>
    <property type="match status" value="1"/>
</dbReference>
<dbReference type="FunFam" id="3.20.20.80:FF:000014">
    <property type="entry name" value="Alpha,alpha-phosphotrehalase"/>
    <property type="match status" value="1"/>
</dbReference>
<dbReference type="FunFam" id="3.20.20.80:FF:000064">
    <property type="entry name" value="Oligo-1,6-glucosidase"/>
    <property type="match status" value="1"/>
</dbReference>
<dbReference type="FunFam" id="2.60.40.1180:FF:000007">
    <property type="entry name" value="Sucrose isomerase"/>
    <property type="match status" value="1"/>
</dbReference>
<dbReference type="FunFam" id="3.90.400.10:FF:000002">
    <property type="entry name" value="Sucrose isomerase"/>
    <property type="match status" value="1"/>
</dbReference>
<dbReference type="Gene3D" id="3.20.20.80">
    <property type="entry name" value="Glycosidases"/>
    <property type="match status" value="1"/>
</dbReference>
<dbReference type="Gene3D" id="2.60.40.1180">
    <property type="entry name" value="Golgi alpha-mannosidase II"/>
    <property type="match status" value="1"/>
</dbReference>
<dbReference type="Gene3D" id="3.90.400.10">
    <property type="entry name" value="Oligo-1,6-glucosidase, Domain 2"/>
    <property type="match status" value="1"/>
</dbReference>
<dbReference type="InterPro" id="IPR006047">
    <property type="entry name" value="Glyco_hydro_13_cat_dom"/>
</dbReference>
<dbReference type="InterPro" id="IPR013780">
    <property type="entry name" value="Glyco_hydro_b"/>
</dbReference>
<dbReference type="InterPro" id="IPR017853">
    <property type="entry name" value="Glycoside_hydrolase_SF"/>
</dbReference>
<dbReference type="InterPro" id="IPR045857">
    <property type="entry name" value="O16G_dom_2"/>
</dbReference>
<dbReference type="InterPro" id="IPR056300">
    <property type="entry name" value="SusG-like_C"/>
</dbReference>
<dbReference type="InterPro" id="IPR012769">
    <property type="entry name" value="Trehalose_TreC"/>
</dbReference>
<dbReference type="NCBIfam" id="NF008183">
    <property type="entry name" value="PRK10933.1"/>
    <property type="match status" value="1"/>
</dbReference>
<dbReference type="NCBIfam" id="TIGR02403">
    <property type="entry name" value="trehalose_treC"/>
    <property type="match status" value="1"/>
</dbReference>
<dbReference type="PANTHER" id="PTHR10357">
    <property type="entry name" value="ALPHA-AMYLASE FAMILY MEMBER"/>
    <property type="match status" value="1"/>
</dbReference>
<dbReference type="PANTHER" id="PTHR10357:SF217">
    <property type="entry name" value="TREHALOSE-6-PHOSPHATE HYDROLASE"/>
    <property type="match status" value="1"/>
</dbReference>
<dbReference type="Pfam" id="PF00128">
    <property type="entry name" value="Alpha-amylase"/>
    <property type="match status" value="1"/>
</dbReference>
<dbReference type="Pfam" id="PF23915">
    <property type="entry name" value="SusG_C"/>
    <property type="match status" value="1"/>
</dbReference>
<dbReference type="SMART" id="SM00642">
    <property type="entry name" value="Aamy"/>
    <property type="match status" value="1"/>
</dbReference>
<dbReference type="SUPFAM" id="SSF51445">
    <property type="entry name" value="(Trans)glycosidases"/>
    <property type="match status" value="1"/>
</dbReference>
<dbReference type="SUPFAM" id="SSF51011">
    <property type="entry name" value="Glycosyl hydrolase domain"/>
    <property type="match status" value="1"/>
</dbReference>
<organism>
    <name type="scientific">Bacillus subtilis (strain 168)</name>
    <dbReference type="NCBI Taxonomy" id="224308"/>
    <lineage>
        <taxon>Bacteria</taxon>
        <taxon>Bacillati</taxon>
        <taxon>Bacillota</taxon>
        <taxon>Bacilli</taxon>
        <taxon>Bacillales</taxon>
        <taxon>Bacillaceae</taxon>
        <taxon>Bacillus</taxon>
    </lineage>
</organism>
<feature type="chain" id="PRO_0000054320" description="Trehalose-6-phosphate hydrolase">
    <location>
        <begin position="1"/>
        <end position="561"/>
    </location>
</feature>
<feature type="active site" description="Nucleophile" evidence="1">
    <location>
        <position position="203"/>
    </location>
</feature>
<feature type="active site" description="Proton donor" evidence="1">
    <location>
        <position position="254"/>
    </location>
</feature>
<feature type="site" description="Transition state stabilizer" evidence="1">
    <location>
        <position position="329"/>
    </location>
</feature>
<feature type="sequence conflict" description="In Ref. 1; CAA91015." evidence="5" ref="1">
    <original>FREAISSIDS</original>
    <variation>LRGDLFNRQ</variation>
    <location>
        <begin position="114"/>
        <end position="123"/>
    </location>
</feature>
<feature type="sequence conflict" description="In Ref. 1; CAA91015/CAA56495." evidence="5" ref="1">
    <original>G</original>
    <variation>E</variation>
    <location>
        <position position="196"/>
    </location>
</feature>
<feature type="sequence conflict" description="In Ref. 1; CAA91015/CAA56495." evidence="5" ref="1">
    <original>PNG</original>
    <variation>LTA</variation>
    <location>
        <begin position="288"/>
        <end position="290"/>
    </location>
</feature>
<feature type="sequence conflict" description="In Ref. 1; CAA91015/CAA56495." evidence="5" ref="1">
    <original>V</original>
    <variation>A</variation>
    <location>
        <position position="386"/>
    </location>
</feature>
<feature type="sequence conflict" description="In Ref. 1." evidence="5" ref="1">
    <original>LRPYESIVYRLTKPC</original>
    <variation>VAHMSPLFIV</variation>
    <location>
        <begin position="547"/>
        <end position="561"/>
    </location>
</feature>
<protein>
    <recommendedName>
        <fullName evidence="5">Trehalose-6-phosphate hydrolase</fullName>
        <ecNumber evidence="2 3">3.2.1.93</ecNumber>
    </recommendedName>
    <alternativeName>
        <fullName>Alpha,alpha-phosphotrehalase</fullName>
    </alternativeName>
    <alternativeName>
        <fullName evidence="4">Phospho-alpha-(1-1)-glucosidase</fullName>
    </alternativeName>
</protein>
<name>TREC_BACSU</name>
<comment type="function">
    <text evidence="2 3">Hydrolyzes trehalose-6-phosphate to glucose and glucose 6-phosphate. Can also very effectively hydrolyze p-nitrophenyl-alpha-D-glucopyranoside, but not lactose, maltose, sucrose or sucrose-6-phosphate. Trehalose is also hydrolyzed, but to a much smaller extent than trehalose-6-phosphate.</text>
</comment>
<comment type="catalytic activity">
    <reaction evidence="2 3">
        <text>alpha,alpha-trehalose 6-phosphate + H2O = D-glucose 6-phosphate + D-glucose</text>
        <dbReference type="Rhea" id="RHEA:23008"/>
        <dbReference type="ChEBI" id="CHEBI:4167"/>
        <dbReference type="ChEBI" id="CHEBI:15377"/>
        <dbReference type="ChEBI" id="CHEBI:58429"/>
        <dbReference type="ChEBI" id="CHEBI:61548"/>
        <dbReference type="EC" id="3.2.1.93"/>
    </reaction>
</comment>
<comment type="activity regulation">
    <text evidence="3">Activity is stimulated by high salt concentrations with different efficiencies depending on the kind of salt. In vitro, inhibited by glucose.</text>
</comment>
<comment type="biophysicochemical properties">
    <phDependence>
        <text evidence="3">Optimum pH is 4.5.</text>
    </phDependence>
    <temperatureDependence>
        <text evidence="3">Optimum temperature is 37 degrees Celsius.</text>
    </temperatureDependence>
</comment>
<comment type="subcellular location">
    <subcellularLocation>
        <location evidence="2">Cytoplasm</location>
    </subcellularLocation>
</comment>
<comment type="induction">
    <text evidence="2">Induced by trehalose and repressed by glucose, fructose or mannitol.</text>
</comment>
<comment type="similarity">
    <text evidence="5">Belongs to the glycosyl hydrolase 13 family.</text>
</comment>